<name>HSP1_SAGIM</name>
<gene>
    <name type="primary">PRM1</name>
</gene>
<keyword id="KW-0158">Chromosome</keyword>
<keyword id="KW-0217">Developmental protein</keyword>
<keyword id="KW-0221">Differentiation</keyword>
<keyword id="KW-1015">Disulfide bond</keyword>
<keyword id="KW-0226">DNA condensation</keyword>
<keyword id="KW-0238">DNA-binding</keyword>
<keyword id="KW-0544">Nucleosome core</keyword>
<keyword id="KW-0539">Nucleus</keyword>
<keyword id="KW-0744">Spermatogenesis</keyword>
<evidence type="ECO:0000250" key="1"/>
<evidence type="ECO:0000305" key="2"/>
<proteinExistence type="evidence at transcript level"/>
<accession>P24714</accession>
<reference key="1">
    <citation type="journal article" date="1991" name="Nucleic Acids Res.">
        <title>Protamine 1 gene sequence from the primate Saguinus imperator isolated with PCR using consensus oligonucleotides.</title>
        <authorList>
            <person name="Queralt R."/>
            <person name="Oliva R."/>
        </authorList>
    </citation>
    <scope>NUCLEOTIDE SEQUENCE [GENOMIC DNA]</scope>
    <source>
        <tissue>Liver</tissue>
    </source>
</reference>
<organism>
    <name type="scientific">Saguinus imperator</name>
    <name type="common">Emperor tamarin</name>
    <dbReference type="NCBI Taxonomy" id="9491"/>
    <lineage>
        <taxon>Eukaryota</taxon>
        <taxon>Metazoa</taxon>
        <taxon>Chordata</taxon>
        <taxon>Craniata</taxon>
        <taxon>Vertebrata</taxon>
        <taxon>Euteleostomi</taxon>
        <taxon>Mammalia</taxon>
        <taxon>Eutheria</taxon>
        <taxon>Euarchontoglires</taxon>
        <taxon>Primates</taxon>
        <taxon>Haplorrhini</taxon>
        <taxon>Platyrrhini</taxon>
        <taxon>Cebidae</taxon>
        <taxon>Callitrichinae</taxon>
        <taxon>Saguinus</taxon>
    </lineage>
</organism>
<feature type="chain" id="PRO_0000191552" description="Sperm protamine P1">
    <location>
        <begin position="1"/>
        <end position="50"/>
    </location>
</feature>
<comment type="function">
    <text>Protamines substitute for histones in the chromatin of sperm during the haploid phase of spermatogenesis. They compact sperm DNA into a highly condensed, stable and inactive complex.</text>
</comment>
<comment type="subunit">
    <text evidence="1">Cross-linked by interchain disulfide bonds around the DNA-helix.</text>
</comment>
<comment type="subcellular location">
    <subcellularLocation>
        <location>Nucleus</location>
    </subcellularLocation>
    <subcellularLocation>
        <location>Chromosome</location>
    </subcellularLocation>
</comment>
<comment type="tissue specificity">
    <text>Testis.</text>
</comment>
<comment type="similarity">
    <text evidence="2">Belongs to the protamine P1 family.</text>
</comment>
<dbReference type="EMBL" id="X61678">
    <property type="protein sequence ID" value="CAA43853.1"/>
    <property type="molecule type" value="Genomic_DNA"/>
</dbReference>
<dbReference type="PIR" id="S22582">
    <property type="entry name" value="S22582"/>
</dbReference>
<dbReference type="GO" id="GO:0000786">
    <property type="term" value="C:nucleosome"/>
    <property type="evidence" value="ECO:0007669"/>
    <property type="project" value="UniProtKB-KW"/>
</dbReference>
<dbReference type="GO" id="GO:0005634">
    <property type="term" value="C:nucleus"/>
    <property type="evidence" value="ECO:0007669"/>
    <property type="project" value="UniProtKB-SubCell"/>
</dbReference>
<dbReference type="GO" id="GO:0003677">
    <property type="term" value="F:DNA binding"/>
    <property type="evidence" value="ECO:0007669"/>
    <property type="project" value="UniProtKB-KW"/>
</dbReference>
<dbReference type="GO" id="GO:0030261">
    <property type="term" value="P:chromosome condensation"/>
    <property type="evidence" value="ECO:0007669"/>
    <property type="project" value="UniProtKB-KW"/>
</dbReference>
<dbReference type="GO" id="GO:0035092">
    <property type="term" value="P:sperm DNA condensation"/>
    <property type="evidence" value="ECO:0007669"/>
    <property type="project" value="InterPro"/>
</dbReference>
<dbReference type="InterPro" id="IPR000221">
    <property type="entry name" value="Protamine_P1"/>
</dbReference>
<dbReference type="Pfam" id="PF00260">
    <property type="entry name" value="Protamine_P1"/>
    <property type="match status" value="1"/>
</dbReference>
<dbReference type="PROSITE" id="PS00048">
    <property type="entry name" value="PROTAMINE_P1"/>
    <property type="match status" value="1"/>
</dbReference>
<sequence>MARYRCCRSQSRSRCYRQRRRGRRRRRRTCRRRRASRCCRRRYKLTCRRY</sequence>
<protein>
    <recommendedName>
        <fullName>Sperm protamine P1</fullName>
    </recommendedName>
    <alternativeName>
        <fullName>Cysteine-rich protamine</fullName>
    </alternativeName>
</protein>